<proteinExistence type="inferred from homology"/>
<accession>Q89AA1</accession>
<sequence length="205" mass="23123">MTLYDKEINKNSLLIPMVIEKTSYGERSYDIYSRLLKERIIFLTGTIDDNTANLIVAQMLFLEAENAKQDIYIYINSPGGVITAGMSIYDTMKFIKPNVNTICIGQACSMAALILTAGKKGYRYCLPNSRIMIHQPIGGYNGQASDIEIHAKEIIKVKRKLNELMAFHTSQSINTIEKDTERDCFLSANQAIKYGLIDTILSYRT</sequence>
<comment type="function">
    <text evidence="1">Cleaves peptides in various proteins in a process that requires ATP hydrolysis. Has a chymotrypsin-like activity. Plays a major role in the degradation of misfolded proteins.</text>
</comment>
<comment type="catalytic activity">
    <reaction evidence="1">
        <text>Hydrolysis of proteins to small peptides in the presence of ATP and magnesium. alpha-casein is the usual test substrate. In the absence of ATP, only oligopeptides shorter than five residues are hydrolyzed (such as succinyl-Leu-Tyr-|-NHMec, and Leu-Tyr-Leu-|-Tyr-Trp, in which cleavage of the -Tyr-|-Leu- and -Tyr-|-Trp bonds also occurs).</text>
        <dbReference type="EC" id="3.4.21.92"/>
    </reaction>
</comment>
<comment type="subunit">
    <text evidence="1">Fourteen ClpP subunits assemble into 2 heptameric rings which stack back to back to give a disk-like structure with a central cavity, resembling the structure of eukaryotic proteasomes.</text>
</comment>
<comment type="subcellular location">
    <subcellularLocation>
        <location evidence="1">Cytoplasm</location>
    </subcellularLocation>
</comment>
<comment type="similarity">
    <text evidence="1">Belongs to the peptidase S14 family.</text>
</comment>
<protein>
    <recommendedName>
        <fullName evidence="1">ATP-dependent Clp protease proteolytic subunit</fullName>
        <ecNumber evidence="1">3.4.21.92</ecNumber>
    </recommendedName>
    <alternativeName>
        <fullName evidence="1">Endopeptidase Clp</fullName>
    </alternativeName>
</protein>
<keyword id="KW-0963">Cytoplasm</keyword>
<keyword id="KW-0378">Hydrolase</keyword>
<keyword id="KW-0645">Protease</keyword>
<keyword id="KW-1185">Reference proteome</keyword>
<keyword id="KW-0720">Serine protease</keyword>
<dbReference type="EC" id="3.4.21.92" evidence="1"/>
<dbReference type="EMBL" id="AE016826">
    <property type="protein sequence ID" value="AAO27129.1"/>
    <property type="molecule type" value="Genomic_DNA"/>
</dbReference>
<dbReference type="RefSeq" id="WP_011091530.1">
    <property type="nucleotide sequence ID" value="NC_004545.1"/>
</dbReference>
<dbReference type="SMR" id="Q89AA1"/>
<dbReference type="STRING" id="224915.bbp_419"/>
<dbReference type="MEROPS" id="S14.001"/>
<dbReference type="KEGG" id="bab:bbp_419"/>
<dbReference type="eggNOG" id="COG0740">
    <property type="taxonomic scope" value="Bacteria"/>
</dbReference>
<dbReference type="HOGENOM" id="CLU_058707_3_2_6"/>
<dbReference type="OrthoDB" id="9802800at2"/>
<dbReference type="Proteomes" id="UP000000601">
    <property type="component" value="Chromosome"/>
</dbReference>
<dbReference type="GO" id="GO:0005737">
    <property type="term" value="C:cytoplasm"/>
    <property type="evidence" value="ECO:0007669"/>
    <property type="project" value="UniProtKB-SubCell"/>
</dbReference>
<dbReference type="GO" id="GO:0009368">
    <property type="term" value="C:endopeptidase Clp complex"/>
    <property type="evidence" value="ECO:0007669"/>
    <property type="project" value="TreeGrafter"/>
</dbReference>
<dbReference type="GO" id="GO:0004176">
    <property type="term" value="F:ATP-dependent peptidase activity"/>
    <property type="evidence" value="ECO:0007669"/>
    <property type="project" value="InterPro"/>
</dbReference>
<dbReference type="GO" id="GO:0051117">
    <property type="term" value="F:ATPase binding"/>
    <property type="evidence" value="ECO:0007669"/>
    <property type="project" value="TreeGrafter"/>
</dbReference>
<dbReference type="GO" id="GO:0004252">
    <property type="term" value="F:serine-type endopeptidase activity"/>
    <property type="evidence" value="ECO:0007669"/>
    <property type="project" value="UniProtKB-UniRule"/>
</dbReference>
<dbReference type="GO" id="GO:0006515">
    <property type="term" value="P:protein quality control for misfolded or incompletely synthesized proteins"/>
    <property type="evidence" value="ECO:0007669"/>
    <property type="project" value="TreeGrafter"/>
</dbReference>
<dbReference type="CDD" id="cd07017">
    <property type="entry name" value="S14_ClpP_2"/>
    <property type="match status" value="1"/>
</dbReference>
<dbReference type="FunFam" id="3.90.226.10:FF:000001">
    <property type="entry name" value="ATP-dependent Clp protease proteolytic subunit"/>
    <property type="match status" value="1"/>
</dbReference>
<dbReference type="Gene3D" id="3.90.226.10">
    <property type="entry name" value="2-enoyl-CoA Hydratase, Chain A, domain 1"/>
    <property type="match status" value="1"/>
</dbReference>
<dbReference type="HAMAP" id="MF_00444">
    <property type="entry name" value="ClpP"/>
    <property type="match status" value="1"/>
</dbReference>
<dbReference type="InterPro" id="IPR001907">
    <property type="entry name" value="ClpP"/>
</dbReference>
<dbReference type="InterPro" id="IPR029045">
    <property type="entry name" value="ClpP/crotonase-like_dom_sf"/>
</dbReference>
<dbReference type="InterPro" id="IPR023562">
    <property type="entry name" value="ClpP/TepA"/>
</dbReference>
<dbReference type="InterPro" id="IPR033135">
    <property type="entry name" value="ClpP_His_AS"/>
</dbReference>
<dbReference type="InterPro" id="IPR018215">
    <property type="entry name" value="ClpP_Ser_AS"/>
</dbReference>
<dbReference type="NCBIfam" id="TIGR00493">
    <property type="entry name" value="clpP"/>
    <property type="match status" value="1"/>
</dbReference>
<dbReference type="NCBIfam" id="NF001368">
    <property type="entry name" value="PRK00277.1"/>
    <property type="match status" value="1"/>
</dbReference>
<dbReference type="NCBIfam" id="NF009205">
    <property type="entry name" value="PRK12553.1"/>
    <property type="match status" value="1"/>
</dbReference>
<dbReference type="PANTHER" id="PTHR10381">
    <property type="entry name" value="ATP-DEPENDENT CLP PROTEASE PROTEOLYTIC SUBUNIT"/>
    <property type="match status" value="1"/>
</dbReference>
<dbReference type="PANTHER" id="PTHR10381:SF70">
    <property type="entry name" value="ATP-DEPENDENT CLP PROTEASE PROTEOLYTIC SUBUNIT"/>
    <property type="match status" value="1"/>
</dbReference>
<dbReference type="Pfam" id="PF00574">
    <property type="entry name" value="CLP_protease"/>
    <property type="match status" value="1"/>
</dbReference>
<dbReference type="PRINTS" id="PR00127">
    <property type="entry name" value="CLPPROTEASEP"/>
</dbReference>
<dbReference type="SUPFAM" id="SSF52096">
    <property type="entry name" value="ClpP/crotonase"/>
    <property type="match status" value="1"/>
</dbReference>
<dbReference type="PROSITE" id="PS00382">
    <property type="entry name" value="CLP_PROTEASE_HIS"/>
    <property type="match status" value="1"/>
</dbReference>
<dbReference type="PROSITE" id="PS00381">
    <property type="entry name" value="CLP_PROTEASE_SER"/>
    <property type="match status" value="1"/>
</dbReference>
<evidence type="ECO:0000255" key="1">
    <source>
        <dbReference type="HAMAP-Rule" id="MF_00444"/>
    </source>
</evidence>
<feature type="chain" id="PRO_0000179521" description="ATP-dependent Clp protease proteolytic subunit">
    <location>
        <begin position="1"/>
        <end position="205"/>
    </location>
</feature>
<feature type="active site" description="Nucleophile" evidence="1">
    <location>
        <position position="109"/>
    </location>
</feature>
<feature type="active site" evidence="1">
    <location>
        <position position="134"/>
    </location>
</feature>
<organism>
    <name type="scientific">Buchnera aphidicola subsp. Baizongia pistaciae (strain Bp)</name>
    <dbReference type="NCBI Taxonomy" id="224915"/>
    <lineage>
        <taxon>Bacteria</taxon>
        <taxon>Pseudomonadati</taxon>
        <taxon>Pseudomonadota</taxon>
        <taxon>Gammaproteobacteria</taxon>
        <taxon>Enterobacterales</taxon>
        <taxon>Erwiniaceae</taxon>
        <taxon>Buchnera</taxon>
    </lineage>
</organism>
<name>CLPP_BUCBP</name>
<gene>
    <name evidence="1" type="primary">clpP</name>
    <name type="ordered locus">bbp_419</name>
</gene>
<reference key="1">
    <citation type="journal article" date="2003" name="Proc. Natl. Acad. Sci. U.S.A.">
        <title>Reductive genome evolution in Buchnera aphidicola.</title>
        <authorList>
            <person name="van Ham R.C.H.J."/>
            <person name="Kamerbeek J."/>
            <person name="Palacios C."/>
            <person name="Rausell C."/>
            <person name="Abascal F."/>
            <person name="Bastolla U."/>
            <person name="Fernandez J.M."/>
            <person name="Jimenez L."/>
            <person name="Postigo M."/>
            <person name="Silva F.J."/>
            <person name="Tamames J."/>
            <person name="Viguera E."/>
            <person name="Latorre A."/>
            <person name="Valencia A."/>
            <person name="Moran F."/>
            <person name="Moya A."/>
        </authorList>
    </citation>
    <scope>NUCLEOTIDE SEQUENCE [LARGE SCALE GENOMIC DNA]</scope>
    <source>
        <strain>Bp</strain>
    </source>
</reference>